<gene>
    <name evidence="1" type="primary">rny</name>
    <name type="ordered locus">RBAM_016800</name>
</gene>
<evidence type="ECO:0000255" key="1">
    <source>
        <dbReference type="HAMAP-Rule" id="MF_00335"/>
    </source>
</evidence>
<evidence type="ECO:0000255" key="2">
    <source>
        <dbReference type="PROSITE-ProRule" id="PRU01175"/>
    </source>
</evidence>
<keyword id="KW-1003">Cell membrane</keyword>
<keyword id="KW-0255">Endonuclease</keyword>
<keyword id="KW-0378">Hydrolase</keyword>
<keyword id="KW-0472">Membrane</keyword>
<keyword id="KW-0540">Nuclease</keyword>
<keyword id="KW-0694">RNA-binding</keyword>
<keyword id="KW-0812">Transmembrane</keyword>
<keyword id="KW-1133">Transmembrane helix</keyword>
<sequence length="519" mass="58739">MTPMTVLISILLTLLGLVVGYYVRKTIAEAKIAGARGAAEQILEDAKRDAEALKKEALLEAKDEIHTLRIDAEQEVRERRNELQKQENRLLQKEENLDRKHEGIDKREAMLEKKDHSLNERQQHIEEMESKVDEMIRMQQSELERISSLTRDEAKQIILDRVENELSHDIAIMTKETENRAKEEADKKAKNILSLALQRCAADHVAETTVSVVNLPNDEMKGRIIGREGRNIRTLETLTGIDLIIDDTPEAVILSGFDPIRRETARIALDKLVQDGRIHPARIEEMVEKSRREVDDYIREMGEQTTFEVGVHGLHPDLIKILGRLKFRTSYGQNVLKHSMEVAFLAGLMASELGEDAKLAKRAGLLHDIGKAIDHEVEGSHVEIGVELATKYKEHPVVINSIASHHGDEEPTSIIAVLVAAADALSAARPGARSETLENYIRRLEKLEEISESYEGVEKSFAIQAGREVRIMVKPDSINDLEAHRLARDIRKRIEDELDYPGHIKVTVIRETRAVEYAK</sequence>
<reference key="1">
    <citation type="journal article" date="2007" name="Nat. Biotechnol.">
        <title>Comparative analysis of the complete genome sequence of the plant growth-promoting bacterium Bacillus amyloliquefaciens FZB42.</title>
        <authorList>
            <person name="Chen X.H."/>
            <person name="Koumoutsi A."/>
            <person name="Scholz R."/>
            <person name="Eisenreich A."/>
            <person name="Schneider K."/>
            <person name="Heinemeyer I."/>
            <person name="Morgenstern B."/>
            <person name="Voss B."/>
            <person name="Hess W.R."/>
            <person name="Reva O."/>
            <person name="Junge H."/>
            <person name="Voigt B."/>
            <person name="Jungblut P.R."/>
            <person name="Vater J."/>
            <person name="Suessmuth R."/>
            <person name="Liesegang H."/>
            <person name="Strittmatter A."/>
            <person name="Gottschalk G."/>
            <person name="Borriss R."/>
        </authorList>
    </citation>
    <scope>NUCLEOTIDE SEQUENCE [LARGE SCALE GENOMIC DNA]</scope>
    <source>
        <strain>DSM 23117 / BGSC 10A6 / LMG 26770 / FZB42</strain>
    </source>
</reference>
<comment type="function">
    <text evidence="1">Endoribonuclease that initiates mRNA decay.</text>
</comment>
<comment type="subcellular location">
    <subcellularLocation>
        <location evidence="1">Cell membrane</location>
        <topology evidence="1">Single-pass membrane protein</topology>
    </subcellularLocation>
</comment>
<comment type="similarity">
    <text evidence="1">Belongs to the RNase Y family.</text>
</comment>
<proteinExistence type="inferred from homology"/>
<protein>
    <recommendedName>
        <fullName evidence="1">Ribonuclease Y</fullName>
        <shortName evidence="1">RNase Y</shortName>
        <ecNumber evidence="1">3.1.-.-</ecNumber>
    </recommendedName>
</protein>
<dbReference type="EC" id="3.1.-.-" evidence="1"/>
<dbReference type="EMBL" id="CP000560">
    <property type="protein sequence ID" value="ABS74043.1"/>
    <property type="molecule type" value="Genomic_DNA"/>
</dbReference>
<dbReference type="RefSeq" id="WP_003154140.1">
    <property type="nucleotide sequence ID" value="NC_009725.2"/>
</dbReference>
<dbReference type="SMR" id="A7Z4W7"/>
<dbReference type="GeneID" id="93080813"/>
<dbReference type="KEGG" id="bay:RBAM_016800"/>
<dbReference type="HOGENOM" id="CLU_028328_1_0_9"/>
<dbReference type="Proteomes" id="UP000001120">
    <property type="component" value="Chromosome"/>
</dbReference>
<dbReference type="GO" id="GO:0005886">
    <property type="term" value="C:plasma membrane"/>
    <property type="evidence" value="ECO:0007669"/>
    <property type="project" value="UniProtKB-SubCell"/>
</dbReference>
<dbReference type="GO" id="GO:0003723">
    <property type="term" value="F:RNA binding"/>
    <property type="evidence" value="ECO:0007669"/>
    <property type="project" value="UniProtKB-UniRule"/>
</dbReference>
<dbReference type="GO" id="GO:0004521">
    <property type="term" value="F:RNA endonuclease activity"/>
    <property type="evidence" value="ECO:0007669"/>
    <property type="project" value="UniProtKB-UniRule"/>
</dbReference>
<dbReference type="GO" id="GO:0006402">
    <property type="term" value="P:mRNA catabolic process"/>
    <property type="evidence" value="ECO:0007669"/>
    <property type="project" value="UniProtKB-UniRule"/>
</dbReference>
<dbReference type="CDD" id="cd00077">
    <property type="entry name" value="HDc"/>
    <property type="match status" value="1"/>
</dbReference>
<dbReference type="CDD" id="cd22431">
    <property type="entry name" value="KH-I_RNaseY"/>
    <property type="match status" value="1"/>
</dbReference>
<dbReference type="FunFam" id="1.10.3210.10:FF:000003">
    <property type="entry name" value="Ribonuclease Y"/>
    <property type="match status" value="1"/>
</dbReference>
<dbReference type="FunFam" id="3.30.1370.10:FF:000006">
    <property type="entry name" value="Ribonuclease Y"/>
    <property type="match status" value="1"/>
</dbReference>
<dbReference type="Gene3D" id="1.10.3210.10">
    <property type="entry name" value="Hypothetical protein af1432"/>
    <property type="match status" value="1"/>
</dbReference>
<dbReference type="Gene3D" id="3.30.1370.10">
    <property type="entry name" value="K Homology domain, type 1"/>
    <property type="match status" value="1"/>
</dbReference>
<dbReference type="HAMAP" id="MF_00335">
    <property type="entry name" value="RNase_Y"/>
    <property type="match status" value="1"/>
</dbReference>
<dbReference type="InterPro" id="IPR003607">
    <property type="entry name" value="HD/PDEase_dom"/>
</dbReference>
<dbReference type="InterPro" id="IPR006674">
    <property type="entry name" value="HD_domain"/>
</dbReference>
<dbReference type="InterPro" id="IPR006675">
    <property type="entry name" value="HDIG_dom"/>
</dbReference>
<dbReference type="InterPro" id="IPR004087">
    <property type="entry name" value="KH_dom"/>
</dbReference>
<dbReference type="InterPro" id="IPR004088">
    <property type="entry name" value="KH_dom_type_1"/>
</dbReference>
<dbReference type="InterPro" id="IPR036612">
    <property type="entry name" value="KH_dom_type_1_sf"/>
</dbReference>
<dbReference type="InterPro" id="IPR017705">
    <property type="entry name" value="Ribonuclease_Y"/>
</dbReference>
<dbReference type="InterPro" id="IPR022711">
    <property type="entry name" value="RNase_Y_N"/>
</dbReference>
<dbReference type="NCBIfam" id="TIGR00277">
    <property type="entry name" value="HDIG"/>
    <property type="match status" value="1"/>
</dbReference>
<dbReference type="NCBIfam" id="TIGR03319">
    <property type="entry name" value="RNase_Y"/>
    <property type="match status" value="1"/>
</dbReference>
<dbReference type="PANTHER" id="PTHR12826">
    <property type="entry name" value="RIBONUCLEASE Y"/>
    <property type="match status" value="1"/>
</dbReference>
<dbReference type="PANTHER" id="PTHR12826:SF15">
    <property type="entry name" value="RIBONUCLEASE Y"/>
    <property type="match status" value="1"/>
</dbReference>
<dbReference type="Pfam" id="PF01966">
    <property type="entry name" value="HD"/>
    <property type="match status" value="1"/>
</dbReference>
<dbReference type="Pfam" id="PF00013">
    <property type="entry name" value="KH_1"/>
    <property type="match status" value="1"/>
</dbReference>
<dbReference type="Pfam" id="PF12072">
    <property type="entry name" value="RNase_Y_N"/>
    <property type="match status" value="1"/>
</dbReference>
<dbReference type="SMART" id="SM00471">
    <property type="entry name" value="HDc"/>
    <property type="match status" value="1"/>
</dbReference>
<dbReference type="SMART" id="SM00322">
    <property type="entry name" value="KH"/>
    <property type="match status" value="1"/>
</dbReference>
<dbReference type="SUPFAM" id="SSF54791">
    <property type="entry name" value="Eukaryotic type KH-domain (KH-domain type I)"/>
    <property type="match status" value="1"/>
</dbReference>
<dbReference type="SUPFAM" id="SSF109604">
    <property type="entry name" value="HD-domain/PDEase-like"/>
    <property type="match status" value="1"/>
</dbReference>
<dbReference type="PROSITE" id="PS51831">
    <property type="entry name" value="HD"/>
    <property type="match status" value="1"/>
</dbReference>
<dbReference type="PROSITE" id="PS50084">
    <property type="entry name" value="KH_TYPE_1"/>
    <property type="match status" value="1"/>
</dbReference>
<accession>A7Z4W7</accession>
<feature type="chain" id="PRO_0000344812" description="Ribonuclease Y">
    <location>
        <begin position="1"/>
        <end position="519"/>
    </location>
</feature>
<feature type="transmembrane region" description="Helical" evidence="1">
    <location>
        <begin position="3"/>
        <end position="23"/>
    </location>
</feature>
<feature type="domain" description="KH" evidence="1">
    <location>
        <begin position="209"/>
        <end position="272"/>
    </location>
</feature>
<feature type="domain" description="HD" evidence="2">
    <location>
        <begin position="335"/>
        <end position="428"/>
    </location>
</feature>
<organism>
    <name type="scientific">Bacillus velezensis (strain DSM 23117 / BGSC 10A6 / LMG 26770 / FZB42)</name>
    <name type="common">Bacillus amyloliquefaciens subsp. plantarum</name>
    <dbReference type="NCBI Taxonomy" id="326423"/>
    <lineage>
        <taxon>Bacteria</taxon>
        <taxon>Bacillati</taxon>
        <taxon>Bacillota</taxon>
        <taxon>Bacilli</taxon>
        <taxon>Bacillales</taxon>
        <taxon>Bacillaceae</taxon>
        <taxon>Bacillus</taxon>
        <taxon>Bacillus amyloliquefaciens group</taxon>
    </lineage>
</organism>
<name>RNY_BACVZ</name>